<feature type="chain" id="PRO_1000060603" description="Integration host factor subunit beta">
    <location>
        <begin position="1"/>
        <end position="95"/>
    </location>
</feature>
<feature type="region of interest" description="Disordered" evidence="2">
    <location>
        <begin position="57"/>
        <end position="76"/>
    </location>
</feature>
<feature type="compositionally biased region" description="Basic and acidic residues" evidence="2">
    <location>
        <begin position="65"/>
        <end position="76"/>
    </location>
</feature>
<comment type="function">
    <text evidence="1">This protein is one of the two subunits of integration host factor, a specific DNA-binding protein that functions in genetic recombination as well as in transcriptional and translational control.</text>
</comment>
<comment type="subunit">
    <text evidence="1">Heterodimer of an alpha and a beta chain.</text>
</comment>
<comment type="similarity">
    <text evidence="1">Belongs to the bacterial histone-like protein family.</text>
</comment>
<name>IHFB_ENT38</name>
<proteinExistence type="inferred from homology"/>
<keyword id="KW-0233">DNA recombination</keyword>
<keyword id="KW-0238">DNA-binding</keyword>
<keyword id="KW-0804">Transcription</keyword>
<keyword id="KW-0805">Transcription regulation</keyword>
<keyword id="KW-0810">Translation regulation</keyword>
<dbReference type="EMBL" id="CP000653">
    <property type="protein sequence ID" value="ABP60111.1"/>
    <property type="molecule type" value="Genomic_DNA"/>
</dbReference>
<dbReference type="RefSeq" id="WP_012016828.1">
    <property type="nucleotide sequence ID" value="NC_009436.1"/>
</dbReference>
<dbReference type="SMR" id="A4W8T1"/>
<dbReference type="STRING" id="399742.Ent638_1431"/>
<dbReference type="GeneID" id="97601077"/>
<dbReference type="KEGG" id="ent:Ent638_1431"/>
<dbReference type="eggNOG" id="COG0776">
    <property type="taxonomic scope" value="Bacteria"/>
</dbReference>
<dbReference type="HOGENOM" id="CLU_105066_2_0_6"/>
<dbReference type="OrthoDB" id="9804203at2"/>
<dbReference type="Proteomes" id="UP000000230">
    <property type="component" value="Chromosome"/>
</dbReference>
<dbReference type="GO" id="GO:0005694">
    <property type="term" value="C:chromosome"/>
    <property type="evidence" value="ECO:0007669"/>
    <property type="project" value="InterPro"/>
</dbReference>
<dbReference type="GO" id="GO:0005829">
    <property type="term" value="C:cytosol"/>
    <property type="evidence" value="ECO:0007669"/>
    <property type="project" value="TreeGrafter"/>
</dbReference>
<dbReference type="GO" id="GO:0003677">
    <property type="term" value="F:DNA binding"/>
    <property type="evidence" value="ECO:0007669"/>
    <property type="project" value="UniProtKB-UniRule"/>
</dbReference>
<dbReference type="GO" id="GO:0030527">
    <property type="term" value="F:structural constituent of chromatin"/>
    <property type="evidence" value="ECO:0007669"/>
    <property type="project" value="InterPro"/>
</dbReference>
<dbReference type="GO" id="GO:0006310">
    <property type="term" value="P:DNA recombination"/>
    <property type="evidence" value="ECO:0007669"/>
    <property type="project" value="UniProtKB-UniRule"/>
</dbReference>
<dbReference type="GO" id="GO:0006355">
    <property type="term" value="P:regulation of DNA-templated transcription"/>
    <property type="evidence" value="ECO:0007669"/>
    <property type="project" value="UniProtKB-UniRule"/>
</dbReference>
<dbReference type="GO" id="GO:0006417">
    <property type="term" value="P:regulation of translation"/>
    <property type="evidence" value="ECO:0007669"/>
    <property type="project" value="UniProtKB-UniRule"/>
</dbReference>
<dbReference type="CDD" id="cd13836">
    <property type="entry name" value="IHF_B"/>
    <property type="match status" value="1"/>
</dbReference>
<dbReference type="FunFam" id="4.10.520.10:FF:000003">
    <property type="entry name" value="Integration host factor subunit beta"/>
    <property type="match status" value="1"/>
</dbReference>
<dbReference type="Gene3D" id="4.10.520.10">
    <property type="entry name" value="IHF-like DNA-binding proteins"/>
    <property type="match status" value="1"/>
</dbReference>
<dbReference type="HAMAP" id="MF_00381">
    <property type="entry name" value="IHF_beta"/>
    <property type="match status" value="1"/>
</dbReference>
<dbReference type="InterPro" id="IPR000119">
    <property type="entry name" value="Hist_DNA-bd"/>
</dbReference>
<dbReference type="InterPro" id="IPR020816">
    <property type="entry name" value="Histone-like_DNA-bd_CS"/>
</dbReference>
<dbReference type="InterPro" id="IPR010992">
    <property type="entry name" value="IHF-like_DNA-bd_dom_sf"/>
</dbReference>
<dbReference type="InterPro" id="IPR005685">
    <property type="entry name" value="IHF_beta"/>
</dbReference>
<dbReference type="NCBIfam" id="TIGR00988">
    <property type="entry name" value="hip"/>
    <property type="match status" value="1"/>
</dbReference>
<dbReference type="NCBIfam" id="NF001222">
    <property type="entry name" value="PRK00199.1"/>
    <property type="match status" value="1"/>
</dbReference>
<dbReference type="PANTHER" id="PTHR33175">
    <property type="entry name" value="DNA-BINDING PROTEIN HU"/>
    <property type="match status" value="1"/>
</dbReference>
<dbReference type="PANTHER" id="PTHR33175:SF5">
    <property type="entry name" value="INTEGRATION HOST FACTOR SUBUNIT BETA"/>
    <property type="match status" value="1"/>
</dbReference>
<dbReference type="Pfam" id="PF00216">
    <property type="entry name" value="Bac_DNA_binding"/>
    <property type="match status" value="1"/>
</dbReference>
<dbReference type="PRINTS" id="PR01727">
    <property type="entry name" value="DNABINDINGHU"/>
</dbReference>
<dbReference type="SMART" id="SM00411">
    <property type="entry name" value="BHL"/>
    <property type="match status" value="1"/>
</dbReference>
<dbReference type="SUPFAM" id="SSF47729">
    <property type="entry name" value="IHF-like DNA-binding proteins"/>
    <property type="match status" value="1"/>
</dbReference>
<dbReference type="PROSITE" id="PS00045">
    <property type="entry name" value="HISTONE_LIKE"/>
    <property type="match status" value="1"/>
</dbReference>
<reference key="1">
    <citation type="journal article" date="2010" name="PLoS Genet.">
        <title>Genome sequence of the plant growth promoting endophytic bacterium Enterobacter sp. 638.</title>
        <authorList>
            <person name="Taghavi S."/>
            <person name="van der Lelie D."/>
            <person name="Hoffman A."/>
            <person name="Zhang Y.B."/>
            <person name="Walla M.D."/>
            <person name="Vangronsveld J."/>
            <person name="Newman L."/>
            <person name="Monchy S."/>
        </authorList>
    </citation>
    <scope>NUCLEOTIDE SEQUENCE [LARGE SCALE GENOMIC DNA]</scope>
    <source>
        <strain>638</strain>
    </source>
</reference>
<evidence type="ECO:0000255" key="1">
    <source>
        <dbReference type="HAMAP-Rule" id="MF_00381"/>
    </source>
</evidence>
<evidence type="ECO:0000256" key="2">
    <source>
        <dbReference type="SAM" id="MobiDB-lite"/>
    </source>
</evidence>
<gene>
    <name evidence="1" type="primary">ihfB</name>
    <name evidence="1" type="synonym">himD</name>
    <name type="ordered locus">Ent638_1431</name>
</gene>
<accession>A4W8T1</accession>
<sequence>MTKSELIERLASQQSHIPAKAVEDAVKEMLEHMASTLAQGERIEIRGFGSFSLHYRAPRTGRNPKTGDKVDLEGKYVPHFKPGKELRDRANIYGN</sequence>
<protein>
    <recommendedName>
        <fullName evidence="1">Integration host factor subunit beta</fullName>
        <shortName evidence="1">IHF-beta</shortName>
    </recommendedName>
</protein>
<organism>
    <name type="scientific">Enterobacter sp. (strain 638)</name>
    <dbReference type="NCBI Taxonomy" id="399742"/>
    <lineage>
        <taxon>Bacteria</taxon>
        <taxon>Pseudomonadati</taxon>
        <taxon>Pseudomonadota</taxon>
        <taxon>Gammaproteobacteria</taxon>
        <taxon>Enterobacterales</taxon>
        <taxon>Enterobacteriaceae</taxon>
        <taxon>Enterobacter</taxon>
    </lineage>
</organism>